<dbReference type="EMBL" id="AB025624">
    <property type="protein sequence ID" value="BAB02474.1"/>
    <property type="molecule type" value="Genomic_DNA"/>
</dbReference>
<dbReference type="EMBL" id="CP002686">
    <property type="protein sequence ID" value="AEE76247.1"/>
    <property type="molecule type" value="Genomic_DNA"/>
</dbReference>
<dbReference type="EMBL" id="AY084922">
    <property type="protein sequence ID" value="AAM61484.1"/>
    <property type="molecule type" value="mRNA"/>
</dbReference>
<dbReference type="RefSeq" id="NP_566638.1">
    <property type="nucleotide sequence ID" value="NM_112836.4"/>
</dbReference>
<dbReference type="SMR" id="Q9LT68"/>
<dbReference type="FunCoup" id="Q9LT68">
    <property type="interactions" value="93"/>
</dbReference>
<dbReference type="STRING" id="3702.Q9LT68"/>
<dbReference type="PaxDb" id="3702-AT3G19490.1"/>
<dbReference type="ProteomicsDB" id="251134"/>
<dbReference type="EnsemblPlants" id="AT3G19490.1">
    <property type="protein sequence ID" value="AT3G19490.1"/>
    <property type="gene ID" value="AT3G19490"/>
</dbReference>
<dbReference type="GeneID" id="821483"/>
<dbReference type="Gramene" id="AT3G19490.1">
    <property type="protein sequence ID" value="AT3G19490.1"/>
    <property type="gene ID" value="AT3G19490"/>
</dbReference>
<dbReference type="KEGG" id="ath:AT3G19490"/>
<dbReference type="Araport" id="AT3G19490"/>
<dbReference type="TAIR" id="AT3G19490">
    <property type="gene designation" value="NHD1"/>
</dbReference>
<dbReference type="eggNOG" id="ENOG502QQAH">
    <property type="taxonomic scope" value="Eukaryota"/>
</dbReference>
<dbReference type="HOGENOM" id="CLU_029697_1_1_1"/>
<dbReference type="InParanoid" id="Q9LT68"/>
<dbReference type="OMA" id="WKLIAYA"/>
<dbReference type="OrthoDB" id="2865258at2759"/>
<dbReference type="PhylomeDB" id="Q9LT68"/>
<dbReference type="PRO" id="PR:Q9LT68"/>
<dbReference type="Proteomes" id="UP000006548">
    <property type="component" value="Chromosome 3"/>
</dbReference>
<dbReference type="ExpressionAtlas" id="Q9LT68">
    <property type="expression patterns" value="baseline and differential"/>
</dbReference>
<dbReference type="GO" id="GO:0009941">
    <property type="term" value="C:chloroplast envelope"/>
    <property type="evidence" value="ECO:0000314"/>
    <property type="project" value="UniProtKB"/>
</dbReference>
<dbReference type="GO" id="GO:0031969">
    <property type="term" value="C:chloroplast membrane"/>
    <property type="evidence" value="ECO:0007669"/>
    <property type="project" value="UniProtKB-SubCell"/>
</dbReference>
<dbReference type="GO" id="GO:0015297">
    <property type="term" value="F:antiporter activity"/>
    <property type="evidence" value="ECO:0000314"/>
    <property type="project" value="UniProtKB"/>
</dbReference>
<dbReference type="GO" id="GO:0050833">
    <property type="term" value="F:pyruvate transmembrane transporter activity"/>
    <property type="evidence" value="ECO:0000315"/>
    <property type="project" value="TAIR"/>
</dbReference>
<dbReference type="GO" id="GO:0006848">
    <property type="term" value="P:pyruvate transport"/>
    <property type="evidence" value="ECO:0000315"/>
    <property type="project" value="TAIR"/>
</dbReference>
<dbReference type="GO" id="GO:0009651">
    <property type="term" value="P:response to salt stress"/>
    <property type="evidence" value="ECO:0000315"/>
    <property type="project" value="UniProtKB"/>
</dbReference>
<dbReference type="GO" id="GO:0006814">
    <property type="term" value="P:sodium ion transport"/>
    <property type="evidence" value="ECO:0000314"/>
    <property type="project" value="UniProtKB"/>
</dbReference>
<dbReference type="InterPro" id="IPR004680">
    <property type="entry name" value="Cit_transptr-like_dom"/>
</dbReference>
<dbReference type="InterPro" id="IPR045016">
    <property type="entry name" value="NhaD-like"/>
</dbReference>
<dbReference type="NCBIfam" id="NF038006">
    <property type="entry name" value="NhaD_1"/>
    <property type="match status" value="1"/>
</dbReference>
<dbReference type="PANTHER" id="PTHR43269">
    <property type="entry name" value="SODIUM/PROTON ANTIPORTER 1-RELATED"/>
    <property type="match status" value="1"/>
</dbReference>
<dbReference type="PANTHER" id="PTHR43269:SF2">
    <property type="entry name" value="SODIUM_PROTON ANTIPORTER 1-RELATED"/>
    <property type="match status" value="1"/>
</dbReference>
<dbReference type="Pfam" id="PF03600">
    <property type="entry name" value="CitMHS"/>
    <property type="match status" value="1"/>
</dbReference>
<gene>
    <name evidence="3" type="primary">NHD1</name>
    <name evidence="5" type="ordered locus">At3g19490</name>
    <name evidence="6" type="ORF">MLD14.23</name>
</gene>
<proteinExistence type="evidence at transcript level"/>
<keyword id="KW-0050">Antiport</keyword>
<keyword id="KW-0150">Chloroplast</keyword>
<keyword id="KW-0406">Ion transport</keyword>
<keyword id="KW-0472">Membrane</keyword>
<keyword id="KW-0934">Plastid</keyword>
<keyword id="KW-1185">Reference proteome</keyword>
<keyword id="KW-0915">Sodium</keyword>
<keyword id="KW-0739">Sodium transport</keyword>
<keyword id="KW-0809">Transit peptide</keyword>
<keyword id="KW-0812">Transmembrane</keyword>
<keyword id="KW-1133">Transmembrane helix</keyword>
<keyword id="KW-0813">Transport</keyword>
<evidence type="ECO:0000255" key="1"/>
<evidence type="ECO:0000269" key="2">
    <source>
    </source>
</evidence>
<evidence type="ECO:0000303" key="3">
    <source>
    </source>
</evidence>
<evidence type="ECO:0000305" key="4"/>
<evidence type="ECO:0000312" key="5">
    <source>
        <dbReference type="Araport" id="AT3G19490"/>
    </source>
</evidence>
<evidence type="ECO:0000312" key="6">
    <source>
        <dbReference type="EMBL" id="BAB02474.1"/>
    </source>
</evidence>
<feature type="transit peptide" description="Chloroplast" evidence="4">
    <location>
        <begin position="1"/>
        <end position="60"/>
    </location>
</feature>
<feature type="chain" id="PRO_0000437697" description="Sodium/proton antiporter 1">
    <location>
        <begin position="61"/>
        <end position="576"/>
    </location>
</feature>
<feature type="transmembrane region" description="Helical" evidence="1">
    <location>
        <begin position="237"/>
        <end position="257"/>
    </location>
</feature>
<feature type="transmembrane region" description="Helical" evidence="1">
    <location>
        <begin position="279"/>
        <end position="299"/>
    </location>
</feature>
<feature type="transmembrane region" description="Helical" evidence="1">
    <location>
        <begin position="320"/>
        <end position="340"/>
    </location>
</feature>
<feature type="transmembrane region" description="Helical" evidence="1">
    <location>
        <begin position="357"/>
        <end position="377"/>
    </location>
</feature>
<feature type="transmembrane region" description="Helical" evidence="1">
    <location>
        <begin position="379"/>
        <end position="399"/>
    </location>
</feature>
<feature type="transmembrane region" description="Helical" evidence="1">
    <location>
        <begin position="426"/>
        <end position="446"/>
    </location>
</feature>
<feature type="transmembrane region" description="Helical" evidence="1">
    <location>
        <begin position="462"/>
        <end position="482"/>
    </location>
</feature>
<feature type="transmembrane region" description="Helical" evidence="1">
    <location>
        <begin position="501"/>
        <end position="521"/>
    </location>
</feature>
<feature type="transmembrane region" description="Helical" evidence="1">
    <location>
        <begin position="541"/>
        <end position="561"/>
    </location>
</feature>
<organism>
    <name type="scientific">Arabidopsis thaliana</name>
    <name type="common">Mouse-ear cress</name>
    <dbReference type="NCBI Taxonomy" id="3702"/>
    <lineage>
        <taxon>Eukaryota</taxon>
        <taxon>Viridiplantae</taxon>
        <taxon>Streptophyta</taxon>
        <taxon>Embryophyta</taxon>
        <taxon>Tracheophyta</taxon>
        <taxon>Spermatophyta</taxon>
        <taxon>Magnoliopsida</taxon>
        <taxon>eudicotyledons</taxon>
        <taxon>Gunneridae</taxon>
        <taxon>Pentapetalae</taxon>
        <taxon>rosids</taxon>
        <taxon>malvids</taxon>
        <taxon>Brassicales</taxon>
        <taxon>Brassicaceae</taxon>
        <taxon>Camelineae</taxon>
        <taxon>Arabidopsis</taxon>
    </lineage>
</organism>
<name>NHD1_ARATH</name>
<accession>Q9LT68</accession>
<comment type="function">
    <text evidence="2">Na(+)/H(+) antiporter that extrudes sodium in exchange for external protons.</text>
</comment>
<comment type="subcellular location">
    <subcellularLocation>
        <location evidence="2">Plastid</location>
        <location evidence="2">Chloroplast membrane</location>
        <topology evidence="1">Multi-pass membrane protein</topology>
    </subcellularLocation>
    <subcellularLocation>
        <location evidence="2">Plastid</location>
        <location evidence="2">Chloroplast envelope</location>
    </subcellularLocation>
</comment>
<comment type="tissue specificity">
    <text evidence="2">Mostly expressed in mature and senescent leaves, and, to a lower extent, in seeds, roots, shoots, flowers and developing siliques.</text>
</comment>
<comment type="disruption phenotype">
    <text evidence="2">Decreased biomasses and lower chlorophyll levels after sodium feeding. Increased Na(+) levels in chloroplasts in high sodium chloride conditions but impaired photosynthetic performance. Altered levels of phenylalanine and tyrosine.</text>
</comment>
<comment type="similarity">
    <text evidence="4">Belongs to the NhaD Na(+)/H(+) (TC 2.A.62) antiporter family.</text>
</comment>
<sequence>MAVFPIGSHFAPPHQLTKRHVIATSSPISISTRLPQNVSFSKVSGVTGSTRLSKHGVLVRAEDKIRSSSSPSSLDEPIDEDLMDSSGLCDPLCSVDEPSSSYFEANYQPKTDIIKALAILAAALTGTAAINHSWVAANQDVAMALLFGIGYAGIIFEESLAFNKSGIGLLMAVSLWVVRSIGAPSTEIAVLDLQHATAEVSEIVFFLLGAMTIVEIVDAHQGFKLVTDNITTRKPKTLLWVVGFVTFFLSSILDNLTSTIVMVSLIRKLVPQSEYRKLLGGVVVIAANAGGAWTPIGDVTTTMLWIHGQISTLPTMKDLFLPSVVSLAVPLALMSLTSEVNGKEQDPKDVLASEKMAPRGKLVFGVGLGALVFVPVFKALTGLPPYMGILLGLGVLWILTDAIHYGESERQKLKVPQALSRIDTQGALFFLGILLSVSSLEAAGILREIANYLDANIPNVELIASAIGVVSAIIDNVPLVAATMGMYDLTSFPQDSEFWQLIAFCAGTGGSMLVIGSAAGVAFMGMEKVDFFWYFRKVSGFAFAGYAAGIAAYLAVHNLHFEIPTTVAQIPFLTGS</sequence>
<protein>
    <recommendedName>
        <fullName evidence="3">Sodium/proton antiporter 1</fullName>
        <shortName evidence="3">AtNHD1</shortName>
        <shortName evidence="3">Na(+)/H(+) antiporter 1</shortName>
    </recommendedName>
</protein>
<reference key="1">
    <citation type="journal article" date="2000" name="DNA Res.">
        <title>Structural analysis of Arabidopsis thaliana chromosome 3. I. Sequence features of the regions of 4,504,864 bp covered by sixty P1 and TAC clones.</title>
        <authorList>
            <person name="Sato S."/>
            <person name="Nakamura Y."/>
            <person name="Kaneko T."/>
            <person name="Katoh T."/>
            <person name="Asamizu E."/>
            <person name="Tabata S."/>
        </authorList>
    </citation>
    <scope>NUCLEOTIDE SEQUENCE [LARGE SCALE GENOMIC DNA]</scope>
    <source>
        <strain>cv. Columbia</strain>
    </source>
</reference>
<reference key="2">
    <citation type="journal article" date="2017" name="Plant J.">
        <title>Araport11: a complete reannotation of the Arabidopsis thaliana reference genome.</title>
        <authorList>
            <person name="Cheng C.Y."/>
            <person name="Krishnakumar V."/>
            <person name="Chan A.P."/>
            <person name="Thibaud-Nissen F."/>
            <person name="Schobel S."/>
            <person name="Town C.D."/>
        </authorList>
    </citation>
    <scope>GENOME REANNOTATION</scope>
    <source>
        <strain>cv. Columbia</strain>
    </source>
</reference>
<reference key="3">
    <citation type="submission" date="2002-03" db="EMBL/GenBank/DDBJ databases">
        <title>Full-length cDNA from Arabidopsis thaliana.</title>
        <authorList>
            <person name="Brover V.V."/>
            <person name="Troukhan M.E."/>
            <person name="Alexandrov N.A."/>
            <person name="Lu Y.-P."/>
            <person name="Flavell R.B."/>
            <person name="Feldmann K.A."/>
        </authorList>
    </citation>
    <scope>NUCLEOTIDE SEQUENCE [LARGE SCALE MRNA]</scope>
</reference>
<reference key="4">
    <citation type="journal article" date="2001" name="Plant Physiol.">
        <title>Phylogenetic relationships within cation transporter families of Arabidopsis.</title>
        <authorList>
            <person name="Maeser P."/>
            <person name="Thomine S."/>
            <person name="Schroeder J.I."/>
            <person name="Ward J.M."/>
            <person name="Hirschi K."/>
            <person name="Sze H."/>
            <person name="Talke I.N."/>
            <person name="Amtmann A."/>
            <person name="Maathuis F.J.M."/>
            <person name="Sanders D."/>
            <person name="Harper J.F."/>
            <person name="Tchieu J."/>
            <person name="Gribskov M."/>
            <person name="Persans M.W."/>
            <person name="Salt D.E."/>
            <person name="Kim S.A."/>
            <person name="Guerinot M.L."/>
        </authorList>
    </citation>
    <scope>REVIEW</scope>
    <scope>GENE FAMILY</scope>
    <scope>NOMENCLATURE</scope>
</reference>
<reference key="5">
    <citation type="journal article" date="2014" name="Plant J.">
        <title>Decreased capacity for sodium export out of Arabidopsis chloroplasts impairs salt tolerance, photosynthesis and plant performance.</title>
        <authorList>
            <person name="Mueller M."/>
            <person name="Kunz H.H."/>
            <person name="Schroeder J.I."/>
            <person name="Kemp G."/>
            <person name="Young H.S."/>
            <person name="Neuhaus H.E."/>
        </authorList>
    </citation>
    <scope>FUNCTION</scope>
    <scope>DISRUPTION PHENOTYPE</scope>
    <scope>SUBCELLULAR LOCATION</scope>
    <scope>TISSUE SPECIFICITY</scope>
    <source>
        <strain>cv. Columbia</strain>
    </source>
</reference>